<dbReference type="EMBL" id="AL513384">
    <property type="protein sequence ID" value="CAD09998.1"/>
    <property type="molecule type" value="Genomic_DNA"/>
</dbReference>
<dbReference type="RefSeq" id="NP_569603.1">
    <property type="nucleotide sequence ID" value="NC_003385.1"/>
</dbReference>
<dbReference type="RefSeq" id="WP_001293470.1">
    <property type="nucleotide sequence ID" value="NZ_CDLH01000055.1"/>
</dbReference>
<dbReference type="GeneID" id="93202009"/>
<dbReference type="KEGG" id="sty:HCM2.0131"/>
<dbReference type="eggNOG" id="ENOG502Z8F1">
    <property type="taxonomic scope" value="Bacteria"/>
</dbReference>
<dbReference type="HOGENOM" id="CLU_056709_0_0_6"/>
<dbReference type="OMA" id="FATHECL"/>
<dbReference type="Proteomes" id="UP000000541">
    <property type="component" value="Plasmid pHCM2"/>
</dbReference>
<dbReference type="GO" id="GO:0003677">
    <property type="term" value="F:DNA binding"/>
    <property type="evidence" value="ECO:0007669"/>
    <property type="project" value="UniProtKB-KW"/>
</dbReference>
<dbReference type="GO" id="GO:0003887">
    <property type="term" value="F:DNA-directed DNA polymerase activity"/>
    <property type="evidence" value="ECO:0007669"/>
    <property type="project" value="InterPro"/>
</dbReference>
<dbReference type="GO" id="GO:0006270">
    <property type="term" value="P:DNA replication initiation"/>
    <property type="evidence" value="ECO:0007669"/>
    <property type="project" value="InterPro"/>
</dbReference>
<dbReference type="GO" id="GO:0006276">
    <property type="term" value="P:plasmid maintenance"/>
    <property type="evidence" value="ECO:0007669"/>
    <property type="project" value="UniProtKB-KW"/>
</dbReference>
<dbReference type="Gene3D" id="1.10.10.10">
    <property type="entry name" value="Winged helix-like DNA-binding domain superfamily/Winged helix DNA-binding domain"/>
    <property type="match status" value="1"/>
</dbReference>
<dbReference type="InterPro" id="IPR000525">
    <property type="entry name" value="Initiator_Rep_WH1"/>
</dbReference>
<dbReference type="InterPro" id="IPR036388">
    <property type="entry name" value="WH-like_DNA-bd_sf"/>
</dbReference>
<dbReference type="Pfam" id="PF01051">
    <property type="entry name" value="Rep3_N"/>
    <property type="match status" value="1"/>
</dbReference>
<comment type="function">
    <text evidence="1">This protein is essential for plasmid replication; it is involved in copy control functions.</text>
</comment>
<comment type="similarity">
    <text evidence="3">Belongs to the initiator RepB protein family.</text>
</comment>
<keyword id="KW-0235">DNA replication</keyword>
<keyword id="KW-0238">DNA-binding</keyword>
<keyword id="KW-0614">Plasmid</keyword>
<keyword id="KW-0615">Plasmid copy control</keyword>
<reference key="1">
    <citation type="journal article" date="2001" name="Nature">
        <title>Complete genome sequence of a multiple drug resistant Salmonella enterica serovar Typhi CT18.</title>
        <authorList>
            <person name="Parkhill J."/>
            <person name="Dougan G."/>
            <person name="James K.D."/>
            <person name="Thomson N.R."/>
            <person name="Pickard D."/>
            <person name="Wain J."/>
            <person name="Churcher C.M."/>
            <person name="Mungall K.L."/>
            <person name="Bentley S.D."/>
            <person name="Holden M.T.G."/>
            <person name="Sebaihia M."/>
            <person name="Baker S."/>
            <person name="Basham D."/>
            <person name="Brooks K."/>
            <person name="Chillingworth T."/>
            <person name="Connerton P."/>
            <person name="Cronin A."/>
            <person name="Davis P."/>
            <person name="Davies R.M."/>
            <person name="Dowd L."/>
            <person name="White N."/>
            <person name="Farrar J."/>
            <person name="Feltwell T."/>
            <person name="Hamlin N."/>
            <person name="Haque A."/>
            <person name="Hien T.T."/>
            <person name="Holroyd S."/>
            <person name="Jagels K."/>
            <person name="Krogh A."/>
            <person name="Larsen T.S."/>
            <person name="Leather S."/>
            <person name="Moule S."/>
            <person name="O'Gaora P."/>
            <person name="Parry C."/>
            <person name="Quail M.A."/>
            <person name="Rutherford K.M."/>
            <person name="Simmonds M."/>
            <person name="Skelton J."/>
            <person name="Stevens K."/>
            <person name="Whitehead S."/>
            <person name="Barrell B.G."/>
        </authorList>
    </citation>
    <scope>NUCLEOTIDE SEQUENCE [LARGE SCALE GENOMIC DNA]</scope>
    <source>
        <strain>CT18</strain>
    </source>
</reference>
<gene>
    <name type="primary">repA</name>
    <name type="ordered locus">HCM2.0131</name>
</gene>
<evidence type="ECO:0000250" key="1"/>
<evidence type="ECO:0000256" key="2">
    <source>
        <dbReference type="SAM" id="MobiDB-lite"/>
    </source>
</evidence>
<evidence type="ECO:0000305" key="3"/>
<feature type="chain" id="PRO_0000068308" description="Replication protein RepA">
    <location>
        <begin position="1"/>
        <end position="351"/>
    </location>
</feature>
<feature type="region of interest" description="Disordered" evidence="2">
    <location>
        <begin position="295"/>
        <end position="315"/>
    </location>
</feature>
<feature type="compositionally biased region" description="Acidic residues" evidence="2">
    <location>
        <begin position="304"/>
        <end position="315"/>
    </location>
</feature>
<organism>
    <name type="scientific">Salmonella typhi</name>
    <dbReference type="NCBI Taxonomy" id="90370"/>
    <lineage>
        <taxon>Bacteria</taxon>
        <taxon>Pseudomonadati</taxon>
        <taxon>Pseudomonadota</taxon>
        <taxon>Gammaproteobacteria</taxon>
        <taxon>Enterobacterales</taxon>
        <taxon>Enterobacteriaceae</taxon>
        <taxon>Salmonella</taxon>
    </lineage>
</organism>
<proteinExistence type="inferred from homology"/>
<protein>
    <recommendedName>
        <fullName>Replication protein RepA</fullName>
    </recommendedName>
</protein>
<sequence>MSENGNKNIAIVEAFSETDKKTGEVVTLVPNTNNTVQPVALMRLGLFVPTLKSTARGRKGQMVSMDASAELKQLSLAKAEGYEDIRISGVRLDMDNDFKTWVGIIHAFAKHKVVGDTVTLPFVEFVRLCGIPTARSSAKLRKRLDSSLTRIATNTISFRSKGSDEYYVTHLVQTAKYSTKNDTVSLQADPKIFELYQFDKKVLLQLRAINELSRKESAQALYTFIESLPPDPAPISLARLRARLNLTSRTITQNATVRKAMEQLREIGYLDYTEVKRGSSVYFIIHYRRPKLRPALPPTKAAPEEPEDILPGDDQEDIIDVVPEEKEGEMVMLSKEELAILEELRKAKARK</sequence>
<geneLocation type="plasmid">
    <name>pHCM2</name>
</geneLocation>
<name>REPA_SALTI</name>
<accession>Q934T6</accession>